<feature type="chain" id="PRO_0000059159" description="Polypeptide N-acetylgalactosaminyltransferase 5">
    <location>
        <begin position="1"/>
        <end position="630"/>
    </location>
</feature>
<feature type="topological domain" description="Cytoplasmic" evidence="2">
    <location>
        <begin position="1"/>
        <end position="20"/>
    </location>
</feature>
<feature type="transmembrane region" description="Helical; Signal-anchor for type II membrane protein" evidence="2">
    <location>
        <begin position="21"/>
        <end position="38"/>
    </location>
</feature>
<feature type="topological domain" description="Lumenal" evidence="2">
    <location>
        <begin position="39"/>
        <end position="630"/>
    </location>
</feature>
<feature type="domain" description="Ricin B-type lectin" evidence="3">
    <location>
        <begin position="500"/>
        <end position="622"/>
    </location>
</feature>
<feature type="region of interest" description="Catalytic subdomain A">
    <location>
        <begin position="186"/>
        <end position="296"/>
    </location>
</feature>
<feature type="region of interest" description="Catalytic subdomain B">
    <location>
        <begin position="356"/>
        <end position="418"/>
    </location>
</feature>
<feature type="binding site" evidence="1">
    <location>
        <position position="227"/>
    </location>
    <ligand>
        <name>substrate</name>
    </ligand>
</feature>
<feature type="binding site" evidence="1">
    <location>
        <position position="257"/>
    </location>
    <ligand>
        <name>substrate</name>
    </ligand>
</feature>
<feature type="binding site" evidence="1">
    <location>
        <position position="280"/>
    </location>
    <ligand>
        <name>Mn(2+)</name>
        <dbReference type="ChEBI" id="CHEBI:29035"/>
    </ligand>
</feature>
<feature type="binding site" evidence="1">
    <location>
        <position position="282"/>
    </location>
    <ligand>
        <name>Mn(2+)</name>
        <dbReference type="ChEBI" id="CHEBI:29035"/>
    </ligand>
</feature>
<feature type="binding site" evidence="1">
    <location>
        <position position="387"/>
    </location>
    <ligand>
        <name>substrate</name>
    </ligand>
</feature>
<feature type="binding site" evidence="1">
    <location>
        <position position="415"/>
    </location>
    <ligand>
        <name>Mn(2+)</name>
        <dbReference type="ChEBI" id="CHEBI:29035"/>
    </ligand>
</feature>
<feature type="binding site" evidence="1">
    <location>
        <position position="418"/>
    </location>
    <ligand>
        <name>substrate</name>
    </ligand>
</feature>
<feature type="binding site" evidence="1">
    <location>
        <position position="423"/>
    </location>
    <ligand>
        <name>substrate</name>
    </ligand>
</feature>
<feature type="glycosylation site" description="N-linked (GlcNAc...) asparagine" evidence="2">
    <location>
        <position position="166"/>
    </location>
</feature>
<feature type="disulfide bond" evidence="3">
    <location>
        <begin position="177"/>
        <end position="410"/>
    </location>
</feature>
<feature type="disulfide bond" evidence="3">
    <location>
        <begin position="401"/>
        <end position="479"/>
    </location>
</feature>
<feature type="disulfide bond" evidence="3">
    <location>
        <begin position="513"/>
        <end position="530"/>
    </location>
</feature>
<feature type="disulfide bond" evidence="3">
    <location>
        <begin position="553"/>
        <end position="568"/>
    </location>
</feature>
<feature type="disulfide bond" evidence="3">
    <location>
        <begin position="594"/>
        <end position="611"/>
    </location>
</feature>
<feature type="splice variant" id="VSP_034631" description="In isoform B." evidence="8">
    <original>IWQCGGILEIIPCSHVGHVFRDKSPYTFPGGVAKIVLHNAARVAEVWLDEWRDFYYSMST</original>
    <variation>VWMCGGVLEIAPCSRVGHVFRKSTPYTFPGGTTEIVNHNNARLVEVWLDDWKEFYYSFYP</variation>
    <location>
        <begin position="398"/>
        <end position="457"/>
    </location>
</feature>
<feature type="sequence conflict" description="In Ref. 4; AAQ56702." evidence="8" ref="4">
    <original>T</original>
    <variation>S</variation>
    <location>
        <position position="591"/>
    </location>
</feature>
<comment type="function">
    <text evidence="4 6 7">Catalyzes the initial reaction in O-linked oligosaccharide biosynthesis, the transfer of an N-acetyl-D-galactosamine residue to a serine or threonine residue on the protein receptor (PubMed:12829714, PubMed:18669915). It can both act as a peptide transferase that transfers GalNAc onto unmodified peptide substrates, and as a glycopeptide transferase that requires the prior addition of a GalNAc on a peptide before adding additional GalNAc moieties. Prefers EA2 as substrate (PubMed:12829714). In the larval midgut, required for O-glycosylation of apical and luminal proteins within copper cells enabling proper gut acidification (PubMed:22157008).</text>
</comment>
<comment type="catalytic activity">
    <reaction evidence="4">
        <text>L-seryl-[protein] + UDP-N-acetyl-alpha-D-galactosamine = a 3-O-[N-acetyl-alpha-D-galactosaminyl]-L-seryl-[protein] + UDP + H(+)</text>
        <dbReference type="Rhea" id="RHEA:23956"/>
        <dbReference type="Rhea" id="RHEA-COMP:9863"/>
        <dbReference type="Rhea" id="RHEA-COMP:12788"/>
        <dbReference type="ChEBI" id="CHEBI:15378"/>
        <dbReference type="ChEBI" id="CHEBI:29999"/>
        <dbReference type="ChEBI" id="CHEBI:53604"/>
        <dbReference type="ChEBI" id="CHEBI:58223"/>
        <dbReference type="ChEBI" id="CHEBI:67138"/>
        <dbReference type="EC" id="2.4.1.41"/>
    </reaction>
</comment>
<comment type="catalytic activity">
    <reaction evidence="4 6">
        <text>L-threonyl-[protein] + UDP-N-acetyl-alpha-D-galactosamine = a 3-O-[N-acetyl-alpha-D-galactosaminyl]-L-threonyl-[protein] + UDP + H(+)</text>
        <dbReference type="Rhea" id="RHEA:52424"/>
        <dbReference type="Rhea" id="RHEA-COMP:11060"/>
        <dbReference type="Rhea" id="RHEA-COMP:11689"/>
        <dbReference type="ChEBI" id="CHEBI:15378"/>
        <dbReference type="ChEBI" id="CHEBI:30013"/>
        <dbReference type="ChEBI" id="CHEBI:58223"/>
        <dbReference type="ChEBI" id="CHEBI:67138"/>
        <dbReference type="ChEBI" id="CHEBI:87075"/>
        <dbReference type="EC" id="2.4.1.41"/>
    </reaction>
</comment>
<comment type="cofactor">
    <cofactor evidence="1">
        <name>Mn(2+)</name>
        <dbReference type="ChEBI" id="CHEBI:29035"/>
    </cofactor>
</comment>
<comment type="pathway">
    <text evidence="9 10">Protein modification; protein glycosylation.</text>
</comment>
<comment type="subcellular location">
    <subcellularLocation>
        <location evidence="1">Golgi apparatus membrane</location>
        <topology evidence="1">Single-pass type II membrane protein</topology>
    </subcellularLocation>
</comment>
<comment type="alternative products">
    <event type="alternative splicing"/>
    <isoform>
        <id>Q6WV17-1</id>
        <name>A</name>
        <sequence type="displayed"/>
    </isoform>
    <isoform>
        <id>Q6WV17-2</id>
        <name>B</name>
        <sequence type="described" ref="VSP_034631"/>
    </isoform>
</comment>
<comment type="tissue specificity">
    <text evidence="4 5">Expressed during oogenesis, in the somatically derived follicle cells that surround the developing oocyte, which are involved in the maturation of the oocyte and construction of the egg shell, as well as playing a role in subsequent embryonic pattern formation. During embryonic stages 9-11, expressed in the primordium of the foregut, midgut and hindgut. Expressed in salivary glands from embryonic stage 12 onwards. During embryonic stages 12-13, expressed in the posterior midgut and hindgut. During embryonic stages 14-17, expressed in the hindgut and the posterior spiracles. Expression is also detected in the epidermis and antennomaxillary complex at embryonic stages 16-17. In third instar larvae, ubiquitously expressed in wing, eye-antennal, leg and haltere imaginal disks.</text>
</comment>
<comment type="developmental stage">
    <text evidence="4 5">Expressed throughout embryonic, larval, pupal and adult stages, with increasing levels during larval development. Transcripts are first detected during embryonic stages 9-11.</text>
</comment>
<comment type="domain">
    <text evidence="1">There are two conserved domains in the glycosyltransferase region: the N-terminal domain (domain A, also called GT1 motif), which is probably involved in manganese coordination and substrate binding and the C-terminal domain (domain B, also called Gal/GalNAc-T motif), which is probably involved in catalytic reaction and UDP-Gal binding.</text>
</comment>
<comment type="domain">
    <text evidence="1">The ricin B-type lectin domain binds to GalNAc and contributes to the glycopeptide specificity.</text>
</comment>
<comment type="disruption phenotype">
    <text evidence="7">Lethal (PubMed:22157008). RNAi-mediated knockdown in the whole body, embryonic mesoderm, respiratory system or digestive system and reproductive tract is lethal (PubMed:22157008). RNAi-mediated knockdown in the larval digestive system, results in loss of gut acidification and disruption of protein O-glycosylation in copper cells (PubMed:22157008). RNAi-mediated knockdown in hemocytes, amnioserosa, endoderm, mesoderm or nervous system causes no defect (PubMed:22157008).</text>
</comment>
<comment type="similarity">
    <text evidence="8">Belongs to the glycosyltransferase 2 family. GalNAc-T subfamily.</text>
</comment>
<comment type="sequence caution" evidence="8">
    <conflict type="erroneous termination">
        <sequence resource="EMBL-CDS" id="AAL25377"/>
    </conflict>
    <text>Truncated C-terminus.</text>
</comment>
<accession>Q6WV17</accession>
<accession>Q0E8T2</accession>
<accession>Q95T43</accession>
<accession>Q9VMU3</accession>
<organism>
    <name type="scientific">Drosophila melanogaster</name>
    <name type="common">Fruit fly</name>
    <dbReference type="NCBI Taxonomy" id="7227"/>
    <lineage>
        <taxon>Eukaryota</taxon>
        <taxon>Metazoa</taxon>
        <taxon>Ecdysozoa</taxon>
        <taxon>Arthropoda</taxon>
        <taxon>Hexapoda</taxon>
        <taxon>Insecta</taxon>
        <taxon>Pterygota</taxon>
        <taxon>Neoptera</taxon>
        <taxon>Endopterygota</taxon>
        <taxon>Diptera</taxon>
        <taxon>Brachycera</taxon>
        <taxon>Muscomorpha</taxon>
        <taxon>Ephydroidea</taxon>
        <taxon>Drosophilidae</taxon>
        <taxon>Drosophila</taxon>
        <taxon>Sophophora</taxon>
    </lineage>
</organism>
<proteinExistence type="evidence at protein level"/>
<protein>
    <recommendedName>
        <fullName>Polypeptide N-acetylgalactosaminyltransferase 5</fullName>
        <shortName>pp-GaNTase 5</shortName>
        <ecNumber evidence="4 6">2.4.1.41</ecNumber>
    </recommendedName>
    <alternativeName>
        <fullName>Protein-UDP acetylgalactosaminyltransferase 5</fullName>
    </alternativeName>
    <alternativeName>
        <fullName>UDP-GalNAc:polypeptide N-acetylgalactosaminyltransferase 5</fullName>
    </alternativeName>
</protein>
<name>GALT5_DROME</name>
<reference key="1">
    <citation type="journal article" date="2000" name="Science">
        <title>The genome sequence of Drosophila melanogaster.</title>
        <authorList>
            <person name="Adams M.D."/>
            <person name="Celniker S.E."/>
            <person name="Holt R.A."/>
            <person name="Evans C.A."/>
            <person name="Gocayne J.D."/>
            <person name="Amanatides P.G."/>
            <person name="Scherer S.E."/>
            <person name="Li P.W."/>
            <person name="Hoskins R.A."/>
            <person name="Galle R.F."/>
            <person name="George R.A."/>
            <person name="Lewis S.E."/>
            <person name="Richards S."/>
            <person name="Ashburner M."/>
            <person name="Henderson S.N."/>
            <person name="Sutton G.G."/>
            <person name="Wortman J.R."/>
            <person name="Yandell M.D."/>
            <person name="Zhang Q."/>
            <person name="Chen L.X."/>
            <person name="Brandon R.C."/>
            <person name="Rogers Y.-H.C."/>
            <person name="Blazej R.G."/>
            <person name="Champe M."/>
            <person name="Pfeiffer B.D."/>
            <person name="Wan K.H."/>
            <person name="Doyle C."/>
            <person name="Baxter E.G."/>
            <person name="Helt G."/>
            <person name="Nelson C.R."/>
            <person name="Miklos G.L.G."/>
            <person name="Abril J.F."/>
            <person name="Agbayani A."/>
            <person name="An H.-J."/>
            <person name="Andrews-Pfannkoch C."/>
            <person name="Baldwin D."/>
            <person name="Ballew R.M."/>
            <person name="Basu A."/>
            <person name="Baxendale J."/>
            <person name="Bayraktaroglu L."/>
            <person name="Beasley E.M."/>
            <person name="Beeson K.Y."/>
            <person name="Benos P.V."/>
            <person name="Berman B.P."/>
            <person name="Bhandari D."/>
            <person name="Bolshakov S."/>
            <person name="Borkova D."/>
            <person name="Botchan M.R."/>
            <person name="Bouck J."/>
            <person name="Brokstein P."/>
            <person name="Brottier P."/>
            <person name="Burtis K.C."/>
            <person name="Busam D.A."/>
            <person name="Butler H."/>
            <person name="Cadieu E."/>
            <person name="Center A."/>
            <person name="Chandra I."/>
            <person name="Cherry J.M."/>
            <person name="Cawley S."/>
            <person name="Dahlke C."/>
            <person name="Davenport L.B."/>
            <person name="Davies P."/>
            <person name="de Pablos B."/>
            <person name="Delcher A."/>
            <person name="Deng Z."/>
            <person name="Mays A.D."/>
            <person name="Dew I."/>
            <person name="Dietz S.M."/>
            <person name="Dodson K."/>
            <person name="Doup L.E."/>
            <person name="Downes M."/>
            <person name="Dugan-Rocha S."/>
            <person name="Dunkov B.C."/>
            <person name="Dunn P."/>
            <person name="Durbin K.J."/>
            <person name="Evangelista C.C."/>
            <person name="Ferraz C."/>
            <person name="Ferriera S."/>
            <person name="Fleischmann W."/>
            <person name="Fosler C."/>
            <person name="Gabrielian A.E."/>
            <person name="Garg N.S."/>
            <person name="Gelbart W.M."/>
            <person name="Glasser K."/>
            <person name="Glodek A."/>
            <person name="Gong F."/>
            <person name="Gorrell J.H."/>
            <person name="Gu Z."/>
            <person name="Guan P."/>
            <person name="Harris M."/>
            <person name="Harris N.L."/>
            <person name="Harvey D.A."/>
            <person name="Heiman T.J."/>
            <person name="Hernandez J.R."/>
            <person name="Houck J."/>
            <person name="Hostin D."/>
            <person name="Houston K.A."/>
            <person name="Howland T.J."/>
            <person name="Wei M.-H."/>
            <person name="Ibegwam C."/>
            <person name="Jalali M."/>
            <person name="Kalush F."/>
            <person name="Karpen G.H."/>
            <person name="Ke Z."/>
            <person name="Kennison J.A."/>
            <person name="Ketchum K.A."/>
            <person name="Kimmel B.E."/>
            <person name="Kodira C.D."/>
            <person name="Kraft C.L."/>
            <person name="Kravitz S."/>
            <person name="Kulp D."/>
            <person name="Lai Z."/>
            <person name="Lasko P."/>
            <person name="Lei Y."/>
            <person name="Levitsky A.A."/>
            <person name="Li J.H."/>
            <person name="Li Z."/>
            <person name="Liang Y."/>
            <person name="Lin X."/>
            <person name="Liu X."/>
            <person name="Mattei B."/>
            <person name="McIntosh T.C."/>
            <person name="McLeod M.P."/>
            <person name="McPherson D."/>
            <person name="Merkulov G."/>
            <person name="Milshina N.V."/>
            <person name="Mobarry C."/>
            <person name="Morris J."/>
            <person name="Moshrefi A."/>
            <person name="Mount S.M."/>
            <person name="Moy M."/>
            <person name="Murphy B."/>
            <person name="Murphy L."/>
            <person name="Muzny D.M."/>
            <person name="Nelson D.L."/>
            <person name="Nelson D.R."/>
            <person name="Nelson K.A."/>
            <person name="Nixon K."/>
            <person name="Nusskern D.R."/>
            <person name="Pacleb J.M."/>
            <person name="Palazzolo M."/>
            <person name="Pittman G.S."/>
            <person name="Pan S."/>
            <person name="Pollard J."/>
            <person name="Puri V."/>
            <person name="Reese M.G."/>
            <person name="Reinert K."/>
            <person name="Remington K."/>
            <person name="Saunders R.D.C."/>
            <person name="Scheeler F."/>
            <person name="Shen H."/>
            <person name="Shue B.C."/>
            <person name="Siden-Kiamos I."/>
            <person name="Simpson M."/>
            <person name="Skupski M.P."/>
            <person name="Smith T.J."/>
            <person name="Spier E."/>
            <person name="Spradling A.C."/>
            <person name="Stapleton M."/>
            <person name="Strong R."/>
            <person name="Sun E."/>
            <person name="Svirskas R."/>
            <person name="Tector C."/>
            <person name="Turner R."/>
            <person name="Venter E."/>
            <person name="Wang A.H."/>
            <person name="Wang X."/>
            <person name="Wang Z.-Y."/>
            <person name="Wassarman D.A."/>
            <person name="Weinstock G.M."/>
            <person name="Weissenbach J."/>
            <person name="Williams S.M."/>
            <person name="Woodage T."/>
            <person name="Worley K.C."/>
            <person name="Wu D."/>
            <person name="Yang S."/>
            <person name="Yao Q.A."/>
            <person name="Ye J."/>
            <person name="Yeh R.-F."/>
            <person name="Zaveri J.S."/>
            <person name="Zhan M."/>
            <person name="Zhang G."/>
            <person name="Zhao Q."/>
            <person name="Zheng L."/>
            <person name="Zheng X.H."/>
            <person name="Zhong F.N."/>
            <person name="Zhong W."/>
            <person name="Zhou X."/>
            <person name="Zhu S.C."/>
            <person name="Zhu X."/>
            <person name="Smith H.O."/>
            <person name="Gibbs R.A."/>
            <person name="Myers E.W."/>
            <person name="Rubin G.M."/>
            <person name="Venter J.C."/>
        </authorList>
    </citation>
    <scope>NUCLEOTIDE SEQUENCE [LARGE SCALE GENOMIC DNA]</scope>
    <source>
        <strain>Berkeley</strain>
    </source>
</reference>
<reference key="2">
    <citation type="journal article" date="2002" name="Genome Biol.">
        <title>Annotation of the Drosophila melanogaster euchromatic genome: a systematic review.</title>
        <authorList>
            <person name="Misra S."/>
            <person name="Crosby M.A."/>
            <person name="Mungall C.J."/>
            <person name="Matthews B.B."/>
            <person name="Campbell K.S."/>
            <person name="Hradecky P."/>
            <person name="Huang Y."/>
            <person name="Kaminker J.S."/>
            <person name="Millburn G.H."/>
            <person name="Prochnik S.E."/>
            <person name="Smith C.D."/>
            <person name="Tupy J.L."/>
            <person name="Whitfield E.J."/>
            <person name="Bayraktaroglu L."/>
            <person name="Berman B.P."/>
            <person name="Bettencourt B.R."/>
            <person name="Celniker S.E."/>
            <person name="de Grey A.D.N.J."/>
            <person name="Drysdale R.A."/>
            <person name="Harris N.L."/>
            <person name="Richter J."/>
            <person name="Russo S."/>
            <person name="Schroeder A.J."/>
            <person name="Shu S.Q."/>
            <person name="Stapleton M."/>
            <person name="Yamada C."/>
            <person name="Ashburner M."/>
            <person name="Gelbart W.M."/>
            <person name="Rubin G.M."/>
            <person name="Lewis S.E."/>
        </authorList>
    </citation>
    <scope>GENOME REANNOTATION</scope>
    <scope>ALTERNATIVE SPLICING</scope>
    <source>
        <strain>Berkeley</strain>
    </source>
</reference>
<reference key="3">
    <citation type="journal article" date="2002" name="Genome Biol.">
        <title>A Drosophila full-length cDNA resource.</title>
        <authorList>
            <person name="Stapleton M."/>
            <person name="Carlson J.W."/>
            <person name="Brokstein P."/>
            <person name="Yu C."/>
            <person name="Champe M."/>
            <person name="George R.A."/>
            <person name="Guarin H."/>
            <person name="Kronmiller B."/>
            <person name="Pacleb J.M."/>
            <person name="Park S."/>
            <person name="Wan K.H."/>
            <person name="Rubin G.M."/>
            <person name="Celniker S.E."/>
        </authorList>
    </citation>
    <scope>NUCLEOTIDE SEQUENCE [LARGE SCALE MRNA] (ISOFORM A)</scope>
    <source>
        <strain>Berkeley</strain>
        <tissue>Head</tissue>
    </source>
</reference>
<reference key="4">
    <citation type="journal article" date="2003" name="J. Biol. Chem.">
        <title>Functional characterization and expression analysis of members of the UDP-GalNAc:polypeptide N-acetylgalactosaminyltransferase family from Drosophila melanogaster.</title>
        <authorList>
            <person name="Ten Hagen K.G."/>
            <person name="Tran D.T."/>
            <person name="Gerken T.A."/>
            <person name="Stein D.S."/>
            <person name="Zhang Z."/>
        </authorList>
    </citation>
    <scope>NUCLEOTIDE SEQUENCE [MRNA] OF 14-630 (ISOFORM A)</scope>
    <scope>FUNCTION</scope>
    <scope>CATALYTIC ACTIVITY</scope>
    <scope>PATHWAY</scope>
    <scope>TISSUE SPECIFICITY</scope>
    <scope>DEVELOPMENTAL STAGE</scope>
    <source>
        <strain>Canton-S</strain>
        <tissue>Embryo</tissue>
    </source>
</reference>
<reference key="5">
    <citation type="journal article" date="2006" name="Glycobiology">
        <title>Expression of the UDP-GalNAc: polypeptide N-acetylgalactosaminyltransferase family is spatially and temporally regulated during Drosophila development.</title>
        <authorList>
            <person name="Tian E."/>
            <person name="Ten Hagen K.G."/>
        </authorList>
    </citation>
    <scope>TISSUE SPECIFICITY</scope>
    <scope>DEVELOPMENTAL STAGE</scope>
</reference>
<reference key="6">
    <citation type="journal article" date="2008" name="Glycobiology">
        <title>Conservation of peptide acceptor preferences between Drosophila and mammalian polypeptide-GalNAc transferase ortholog pairs.</title>
        <authorList>
            <person name="Gerken T.A."/>
            <person name="Ten Hagen K.G."/>
            <person name="Jamison O."/>
        </authorList>
    </citation>
    <scope>FUNCTION</scope>
    <scope>CATALYTIC ACTIVITY</scope>
    <scope>PATHWAY</scope>
</reference>
<reference key="7">
    <citation type="journal article" date="2012" name="J. Biol. Chem.">
        <title>Multiple members of the UDP-GalNAc: polypeptide N-acetylgalactosaminyltransferase family are essential for viability in Drosophila.</title>
        <authorList>
            <person name="Tran D.T."/>
            <person name="Zhang L."/>
            <person name="Zhang Y."/>
            <person name="Tian E."/>
            <person name="Earl L.A."/>
            <person name="Ten Hagen K.G."/>
        </authorList>
    </citation>
    <scope>FUNCTION</scope>
    <scope>DISRUPTION PHENOTYPE</scope>
</reference>
<evidence type="ECO:0000250" key="1"/>
<evidence type="ECO:0000255" key="2"/>
<evidence type="ECO:0000255" key="3">
    <source>
        <dbReference type="PROSITE-ProRule" id="PRU00174"/>
    </source>
</evidence>
<evidence type="ECO:0000269" key="4">
    <source>
    </source>
</evidence>
<evidence type="ECO:0000269" key="5">
    <source>
    </source>
</evidence>
<evidence type="ECO:0000269" key="6">
    <source>
    </source>
</evidence>
<evidence type="ECO:0000269" key="7">
    <source>
    </source>
</evidence>
<evidence type="ECO:0000305" key="8"/>
<evidence type="ECO:0000305" key="9">
    <source>
    </source>
</evidence>
<evidence type="ECO:0000305" key="10">
    <source>
    </source>
</evidence>
<evidence type="ECO:0000312" key="11">
    <source>
        <dbReference type="FlyBase" id="FBgn0031681"/>
    </source>
</evidence>
<dbReference type="EC" id="2.4.1.41" evidence="4 6"/>
<dbReference type="EMBL" id="AE014134">
    <property type="protein sequence ID" value="AAF52218.2"/>
    <property type="molecule type" value="Genomic_DNA"/>
</dbReference>
<dbReference type="EMBL" id="AE014134">
    <property type="protein sequence ID" value="ABI31292.1"/>
    <property type="molecule type" value="Genomic_DNA"/>
</dbReference>
<dbReference type="EMBL" id="AY060338">
    <property type="protein sequence ID" value="AAL25377.1"/>
    <property type="status" value="ALT_SEQ"/>
    <property type="molecule type" value="mRNA"/>
</dbReference>
<dbReference type="EMBL" id="AY268066">
    <property type="protein sequence ID" value="AAQ56702.1"/>
    <property type="molecule type" value="mRNA"/>
</dbReference>
<dbReference type="RefSeq" id="NP_001036338.1">
    <molecule id="Q6WV17-2"/>
    <property type="nucleotide sequence ID" value="NM_001042873.2"/>
</dbReference>
<dbReference type="RefSeq" id="NP_608906.2">
    <molecule id="Q6WV17-1"/>
    <property type="nucleotide sequence ID" value="NM_135062.4"/>
</dbReference>
<dbReference type="SMR" id="Q6WV17"/>
<dbReference type="BioGRID" id="77405">
    <property type="interactions" value="1"/>
</dbReference>
<dbReference type="FunCoup" id="Q6WV17">
    <property type="interactions" value="1610"/>
</dbReference>
<dbReference type="IntAct" id="Q6WV17">
    <property type="interactions" value="2"/>
</dbReference>
<dbReference type="STRING" id="7227.FBpp0078663"/>
<dbReference type="CAZy" id="CBM13">
    <property type="family name" value="Carbohydrate-Binding Module Family 13"/>
</dbReference>
<dbReference type="CAZy" id="GT27">
    <property type="family name" value="Glycosyltransferase Family 27"/>
</dbReference>
<dbReference type="GlyCosmos" id="Q6WV17">
    <property type="glycosylation" value="1 site, No reported glycans"/>
</dbReference>
<dbReference type="GlyGen" id="Q6WV17">
    <property type="glycosylation" value="1 site"/>
</dbReference>
<dbReference type="SwissPalm" id="Q6WV17"/>
<dbReference type="PaxDb" id="7227-FBpp0078663"/>
<dbReference type="EnsemblMetazoa" id="FBtr0079026">
    <molecule id="Q6WV17-1"/>
    <property type="protein sequence ID" value="FBpp0078663"/>
    <property type="gene ID" value="FBgn0031681"/>
</dbReference>
<dbReference type="EnsemblMetazoa" id="FBtr0111024">
    <molecule id="Q6WV17-2"/>
    <property type="protein sequence ID" value="FBpp0110323"/>
    <property type="gene ID" value="FBgn0031681"/>
</dbReference>
<dbReference type="GeneID" id="326151"/>
<dbReference type="KEGG" id="dme:Dmel_CG31651"/>
<dbReference type="UCSC" id="CG31651-RB">
    <property type="organism name" value="d. melanogaster"/>
</dbReference>
<dbReference type="AGR" id="FB:FBgn0031681"/>
<dbReference type="CTD" id="326151"/>
<dbReference type="FlyBase" id="FBgn0031681">
    <property type="gene designation" value="Pgant5"/>
</dbReference>
<dbReference type="VEuPathDB" id="VectorBase:FBgn0031681"/>
<dbReference type="eggNOG" id="KOG3736">
    <property type="taxonomic scope" value="Eukaryota"/>
</dbReference>
<dbReference type="GeneTree" id="ENSGT00940000169874"/>
<dbReference type="HOGENOM" id="CLU_013477_0_1_1"/>
<dbReference type="InParanoid" id="Q6WV17"/>
<dbReference type="OMA" id="MGQGFAP"/>
<dbReference type="OrthoDB" id="5988548at2759"/>
<dbReference type="PhylomeDB" id="Q6WV17"/>
<dbReference type="BRENDA" id="2.4.1.41">
    <property type="organism ID" value="1994"/>
</dbReference>
<dbReference type="Reactome" id="R-DME-913709">
    <property type="pathway name" value="O-linked glycosylation of mucins"/>
</dbReference>
<dbReference type="UniPathway" id="UPA00378"/>
<dbReference type="BioGRID-ORCS" id="326151">
    <property type="hits" value="0 hits in 1 CRISPR screen"/>
</dbReference>
<dbReference type="ChiTaRS" id="pgant5">
    <property type="organism name" value="fly"/>
</dbReference>
<dbReference type="GenomeRNAi" id="326151"/>
<dbReference type="PRO" id="PR:Q6WV17"/>
<dbReference type="Proteomes" id="UP000000803">
    <property type="component" value="Chromosome 2L"/>
</dbReference>
<dbReference type="Bgee" id="FBgn0031681">
    <property type="expression patterns" value="Expressed in dorsal appendage forming follicle cell in ovary and 258 other cell types or tissues"/>
</dbReference>
<dbReference type="GO" id="GO:0012505">
    <property type="term" value="C:endomembrane system"/>
    <property type="evidence" value="ECO:0007005"/>
    <property type="project" value="FlyBase"/>
</dbReference>
<dbReference type="GO" id="GO:0005794">
    <property type="term" value="C:Golgi apparatus"/>
    <property type="evidence" value="ECO:0000318"/>
    <property type="project" value="GO_Central"/>
</dbReference>
<dbReference type="GO" id="GO:0000139">
    <property type="term" value="C:Golgi membrane"/>
    <property type="evidence" value="ECO:0000304"/>
    <property type="project" value="FlyBase"/>
</dbReference>
<dbReference type="GO" id="GO:0005795">
    <property type="term" value="C:Golgi stack"/>
    <property type="evidence" value="ECO:0000303"/>
    <property type="project" value="UniProtKB"/>
</dbReference>
<dbReference type="GO" id="GO:0030246">
    <property type="term" value="F:carbohydrate binding"/>
    <property type="evidence" value="ECO:0007669"/>
    <property type="project" value="UniProtKB-KW"/>
</dbReference>
<dbReference type="GO" id="GO:0046872">
    <property type="term" value="F:metal ion binding"/>
    <property type="evidence" value="ECO:0007669"/>
    <property type="project" value="UniProtKB-KW"/>
</dbReference>
<dbReference type="GO" id="GO:0004653">
    <property type="term" value="F:polypeptide N-acetylgalactosaminyltransferase activity"/>
    <property type="evidence" value="ECO:0000314"/>
    <property type="project" value="UniProtKB"/>
</dbReference>
<dbReference type="GO" id="GO:0006493">
    <property type="term" value="P:protein O-linked glycosylation"/>
    <property type="evidence" value="ECO:0000314"/>
    <property type="project" value="UniProtKB"/>
</dbReference>
<dbReference type="CDD" id="cd23433">
    <property type="entry name" value="beta-trefoil_Ricin_GALNT1-like"/>
    <property type="match status" value="1"/>
</dbReference>
<dbReference type="CDD" id="cd02510">
    <property type="entry name" value="pp-GalNAc-T"/>
    <property type="match status" value="1"/>
</dbReference>
<dbReference type="FunFam" id="2.80.10.50:FF:000047">
    <property type="entry name" value="Polypeptide N-acetylgalactosaminyltransferase"/>
    <property type="match status" value="1"/>
</dbReference>
<dbReference type="FunFam" id="3.90.550.10:FF:000005">
    <property type="entry name" value="Polypeptide N-acetylgalactosaminyltransferase"/>
    <property type="match status" value="1"/>
</dbReference>
<dbReference type="Gene3D" id="2.80.10.50">
    <property type="match status" value="1"/>
</dbReference>
<dbReference type="Gene3D" id="3.90.550.10">
    <property type="entry name" value="Spore Coat Polysaccharide Biosynthesis Protein SpsA, Chain A"/>
    <property type="match status" value="1"/>
</dbReference>
<dbReference type="InterPro" id="IPR045885">
    <property type="entry name" value="GalNAc-T"/>
</dbReference>
<dbReference type="InterPro" id="IPR001173">
    <property type="entry name" value="Glyco_trans_2-like"/>
</dbReference>
<dbReference type="InterPro" id="IPR029044">
    <property type="entry name" value="Nucleotide-diphossugar_trans"/>
</dbReference>
<dbReference type="InterPro" id="IPR035992">
    <property type="entry name" value="Ricin_B-like_lectins"/>
</dbReference>
<dbReference type="InterPro" id="IPR000772">
    <property type="entry name" value="Ricin_B_lectin"/>
</dbReference>
<dbReference type="PANTHER" id="PTHR11675">
    <property type="entry name" value="N-ACETYLGALACTOSAMINYLTRANSFERASE"/>
    <property type="match status" value="1"/>
</dbReference>
<dbReference type="PANTHER" id="PTHR11675:SF101">
    <property type="entry name" value="POLYPEPTIDE N-ACETYLGALACTOSAMINYLTRANSFERASE 5"/>
    <property type="match status" value="1"/>
</dbReference>
<dbReference type="Pfam" id="PF00535">
    <property type="entry name" value="Glycos_transf_2"/>
    <property type="match status" value="1"/>
</dbReference>
<dbReference type="Pfam" id="PF00652">
    <property type="entry name" value="Ricin_B_lectin"/>
    <property type="match status" value="1"/>
</dbReference>
<dbReference type="SMART" id="SM00458">
    <property type="entry name" value="RICIN"/>
    <property type="match status" value="1"/>
</dbReference>
<dbReference type="SUPFAM" id="SSF53448">
    <property type="entry name" value="Nucleotide-diphospho-sugar transferases"/>
    <property type="match status" value="1"/>
</dbReference>
<dbReference type="SUPFAM" id="SSF50370">
    <property type="entry name" value="Ricin B-like lectins"/>
    <property type="match status" value="1"/>
</dbReference>
<dbReference type="PROSITE" id="PS50231">
    <property type="entry name" value="RICIN_B_LECTIN"/>
    <property type="match status" value="1"/>
</dbReference>
<sequence>MTFSTFTRKMRGRMRSNTCRIVLLTSLVWVIFDFVLIARYSDCIGKDGWRCKRSGEYDVELPNAERLVDDNQLVDDNEINTEKSLDGESGGALIMGQGFASGGISMTYPSVVLKKWFLAPSVQEAKGKPGEMGKPVKIPADMKDLMKEKFKENQFNLLASDMISLNRSLTDVRHEGCRRKHYASKLPTTSIVIVFHNEAWTTLLRTVWSVINRSPRALLKEIILVDDASERDFLGKQLEEYVAKLPVKTFVLRTEKRSGLIRARLLGAEHVSGEVITFLDAHCECTEGWLEPLLARIVQNRRTVVCPIIDVISDETFEYITASDSTWGGFNWKLNFRWYRVPSREMARRNNDRTAPLRTPTMAGGLFSIDKDYFYEIGSYDEGMDIWGGENLEMSFRIWQCGGILEIIPCSHVGHVFRDKSPYTFPGGVAKIVLHNAARVAEVWLDEWRDFYYSMSTGARKASAGDVSDRKALRDRLKCKSFRWYLENVYPESLMPLDYYYLGEIRNAETETCLDTMGRKYNEKVGISYCHGLGGNQVFAYTKRQQIMSDDLCLDASSSNGPVNMVRCHNMGGNQEWVYDAEEKWIRHTNTGQCLQRATRDDANTPLLRPCSYGKGQQWLMESKFKWQAH</sequence>
<keyword id="KW-0025">Alternative splicing</keyword>
<keyword id="KW-1015">Disulfide bond</keyword>
<keyword id="KW-0325">Glycoprotein</keyword>
<keyword id="KW-0328">Glycosyltransferase</keyword>
<keyword id="KW-0333">Golgi apparatus</keyword>
<keyword id="KW-0430">Lectin</keyword>
<keyword id="KW-0464">Manganese</keyword>
<keyword id="KW-0472">Membrane</keyword>
<keyword id="KW-0479">Metal-binding</keyword>
<keyword id="KW-1185">Reference proteome</keyword>
<keyword id="KW-0735">Signal-anchor</keyword>
<keyword id="KW-0808">Transferase</keyword>
<keyword id="KW-0812">Transmembrane</keyword>
<keyword id="KW-1133">Transmembrane helix</keyword>
<gene>
    <name evidence="11" type="primary">Pgant5</name>
    <name evidence="11" type="ORF">CG31651</name>
</gene>